<accession>A8F9T1</accession>
<protein>
    <recommendedName>
        <fullName evidence="1">1-pyrroline-5-carboxylate dehydrogenase</fullName>
        <shortName evidence="1">P5C dehydrogenase</shortName>
        <ecNumber evidence="1">1.2.1.88</ecNumber>
    </recommendedName>
    <alternativeName>
        <fullName evidence="1">L-glutamate gamma-semialdehyde dehydrogenase</fullName>
    </alternativeName>
</protein>
<organism>
    <name type="scientific">Bacillus pumilus (strain SAFR-032)</name>
    <dbReference type="NCBI Taxonomy" id="315750"/>
    <lineage>
        <taxon>Bacteria</taxon>
        <taxon>Bacillati</taxon>
        <taxon>Bacillota</taxon>
        <taxon>Bacilli</taxon>
        <taxon>Bacillales</taxon>
        <taxon>Bacillaceae</taxon>
        <taxon>Bacillus</taxon>
    </lineage>
</organism>
<gene>
    <name evidence="1" type="primary">rocA</name>
    <name type="ordered locus">BPUM_0301</name>
</gene>
<sequence>MTTPYKHEPFTDFSQEENRKAFEQALGKVTETLGQTYPLVINGERIETKDQIVSINPAKKDEVVGTVSKAGKEEAEQAVQAAAKAFETWRYTSPEERASVIFRAAANIRRKKHEYSALLVKEAGKPWNEADADTAEAIDFLEYYARQMLELAKGKPVNSREGEHNQYVYTPTGVTLVIPPWNFLFAIMAGTTVAPIVTGNTVVLKPASATPVIAARFVEELEQAGLPKGVVNFVPGSGAEVGDYLVDHPKTSLITFTGSREVGTRIFERAAKVQPGQQHLKRVIAEMGGKDTVVVDEDADVELAANAIFTSAFGFSGQKCSAGSRAVVHEKLYDQVIERVKEITETKTTANPLSADVYMGPVIDQASFDKITDYIEVGKQEGRLVTGGTSDDTEGYFIHPTVFADLEPTSRLMQEEIFGPVLAFSKVSSFDEALEVANNTEYGLTGAVITNNRDHINRAKQEFHVGNLYFNRNCTGAIVGYHPFGGFKMSGTDSKAGGPDYLALHMQAKTISEMF</sequence>
<dbReference type="EC" id="1.2.1.88" evidence="1"/>
<dbReference type="EMBL" id="CP000813">
    <property type="protein sequence ID" value="ABV60998.1"/>
    <property type="molecule type" value="Genomic_DNA"/>
</dbReference>
<dbReference type="RefSeq" id="WP_012008868.1">
    <property type="nucleotide sequence ID" value="NC_009848.4"/>
</dbReference>
<dbReference type="SMR" id="A8F9T1"/>
<dbReference type="STRING" id="315750.BPUM_0301"/>
<dbReference type="GeneID" id="5619551"/>
<dbReference type="KEGG" id="bpu:BPUM_0301"/>
<dbReference type="eggNOG" id="COG1012">
    <property type="taxonomic scope" value="Bacteria"/>
</dbReference>
<dbReference type="HOGENOM" id="CLU_005391_0_0_9"/>
<dbReference type="OrthoDB" id="9762913at2"/>
<dbReference type="UniPathway" id="UPA00261">
    <property type="reaction ID" value="UER00374"/>
</dbReference>
<dbReference type="Proteomes" id="UP000001355">
    <property type="component" value="Chromosome"/>
</dbReference>
<dbReference type="GO" id="GO:0009898">
    <property type="term" value="C:cytoplasmic side of plasma membrane"/>
    <property type="evidence" value="ECO:0007669"/>
    <property type="project" value="TreeGrafter"/>
</dbReference>
<dbReference type="GO" id="GO:0003842">
    <property type="term" value="F:1-pyrroline-5-carboxylate dehydrogenase activity"/>
    <property type="evidence" value="ECO:0007669"/>
    <property type="project" value="UniProtKB-UniRule"/>
</dbReference>
<dbReference type="GO" id="GO:0006537">
    <property type="term" value="P:glutamate biosynthetic process"/>
    <property type="evidence" value="ECO:0007669"/>
    <property type="project" value="UniProtKB-UniRule"/>
</dbReference>
<dbReference type="GO" id="GO:0010133">
    <property type="term" value="P:proline catabolic process to glutamate"/>
    <property type="evidence" value="ECO:0007669"/>
    <property type="project" value="UniProtKB-UniPathway"/>
</dbReference>
<dbReference type="CDD" id="cd07124">
    <property type="entry name" value="ALDH_PutA-P5CDH-RocA"/>
    <property type="match status" value="1"/>
</dbReference>
<dbReference type="FunFam" id="3.40.309.10:FF:000005">
    <property type="entry name" value="1-pyrroline-5-carboxylate dehydrogenase 1"/>
    <property type="match status" value="1"/>
</dbReference>
<dbReference type="FunFam" id="3.40.605.10:FF:000045">
    <property type="entry name" value="1-pyrroline-5-carboxylate dehydrogenase 1"/>
    <property type="match status" value="1"/>
</dbReference>
<dbReference type="Gene3D" id="3.40.605.10">
    <property type="entry name" value="Aldehyde Dehydrogenase, Chain A, domain 1"/>
    <property type="match status" value="1"/>
</dbReference>
<dbReference type="Gene3D" id="3.40.309.10">
    <property type="entry name" value="Aldehyde Dehydrogenase, Chain A, domain 2"/>
    <property type="match status" value="1"/>
</dbReference>
<dbReference type="HAMAP" id="MF_00733">
    <property type="entry name" value="RocA"/>
    <property type="match status" value="1"/>
</dbReference>
<dbReference type="InterPro" id="IPR016161">
    <property type="entry name" value="Ald_DH/histidinol_DH"/>
</dbReference>
<dbReference type="InterPro" id="IPR016163">
    <property type="entry name" value="Ald_DH_C"/>
</dbReference>
<dbReference type="InterPro" id="IPR016160">
    <property type="entry name" value="Ald_DH_CS_CYS"/>
</dbReference>
<dbReference type="InterPro" id="IPR029510">
    <property type="entry name" value="Ald_DH_CS_GLU"/>
</dbReference>
<dbReference type="InterPro" id="IPR016162">
    <property type="entry name" value="Ald_DH_N"/>
</dbReference>
<dbReference type="InterPro" id="IPR015590">
    <property type="entry name" value="Aldehyde_DH_dom"/>
</dbReference>
<dbReference type="InterPro" id="IPR050485">
    <property type="entry name" value="Proline_metab_enzyme"/>
</dbReference>
<dbReference type="InterPro" id="IPR005932">
    <property type="entry name" value="RocA"/>
</dbReference>
<dbReference type="InterPro" id="IPR047597">
    <property type="entry name" value="RocA_bacillales"/>
</dbReference>
<dbReference type="NCBIfam" id="TIGR01237">
    <property type="entry name" value="D1pyr5carbox2"/>
    <property type="match status" value="1"/>
</dbReference>
<dbReference type="NCBIfam" id="NF002852">
    <property type="entry name" value="PRK03137.1"/>
    <property type="match status" value="1"/>
</dbReference>
<dbReference type="PANTHER" id="PTHR42862">
    <property type="entry name" value="DELTA-1-PYRROLINE-5-CARBOXYLATE DEHYDROGENASE 1, ISOFORM A-RELATED"/>
    <property type="match status" value="1"/>
</dbReference>
<dbReference type="PANTHER" id="PTHR42862:SF1">
    <property type="entry name" value="DELTA-1-PYRROLINE-5-CARBOXYLATE DEHYDROGENASE 2, ISOFORM A-RELATED"/>
    <property type="match status" value="1"/>
</dbReference>
<dbReference type="Pfam" id="PF00171">
    <property type="entry name" value="Aldedh"/>
    <property type="match status" value="1"/>
</dbReference>
<dbReference type="SUPFAM" id="SSF53720">
    <property type="entry name" value="ALDH-like"/>
    <property type="match status" value="1"/>
</dbReference>
<dbReference type="PROSITE" id="PS00070">
    <property type="entry name" value="ALDEHYDE_DEHYDR_CYS"/>
    <property type="match status" value="1"/>
</dbReference>
<dbReference type="PROSITE" id="PS00687">
    <property type="entry name" value="ALDEHYDE_DEHYDR_GLU"/>
    <property type="match status" value="1"/>
</dbReference>
<name>ROCA_BACP2</name>
<proteinExistence type="inferred from homology"/>
<evidence type="ECO:0000255" key="1">
    <source>
        <dbReference type="HAMAP-Rule" id="MF_00733"/>
    </source>
</evidence>
<feature type="chain" id="PRO_1000062115" description="1-pyrroline-5-carboxylate dehydrogenase">
    <location>
        <begin position="1"/>
        <end position="515"/>
    </location>
</feature>
<feature type="active site" evidence="1">
    <location>
        <position position="286"/>
    </location>
</feature>
<feature type="active site" evidence="1">
    <location>
        <position position="320"/>
    </location>
</feature>
<comment type="catalytic activity">
    <reaction evidence="1">
        <text>L-glutamate 5-semialdehyde + NAD(+) + H2O = L-glutamate + NADH + 2 H(+)</text>
        <dbReference type="Rhea" id="RHEA:30235"/>
        <dbReference type="ChEBI" id="CHEBI:15377"/>
        <dbReference type="ChEBI" id="CHEBI:15378"/>
        <dbReference type="ChEBI" id="CHEBI:29985"/>
        <dbReference type="ChEBI" id="CHEBI:57540"/>
        <dbReference type="ChEBI" id="CHEBI:57945"/>
        <dbReference type="ChEBI" id="CHEBI:58066"/>
        <dbReference type="EC" id="1.2.1.88"/>
    </reaction>
</comment>
<comment type="pathway">
    <text evidence="1">Amino-acid degradation; L-proline degradation into L-glutamate; L-glutamate from L-proline: step 2/2.</text>
</comment>
<comment type="similarity">
    <text evidence="1">Belongs to the aldehyde dehydrogenase family. RocA subfamily.</text>
</comment>
<keyword id="KW-0520">NAD</keyword>
<keyword id="KW-0560">Oxidoreductase</keyword>
<reference key="1">
    <citation type="journal article" date="2007" name="PLoS ONE">
        <title>Paradoxical DNA repair and peroxide resistance gene conservation in Bacillus pumilus SAFR-032.</title>
        <authorList>
            <person name="Gioia J."/>
            <person name="Yerrapragada S."/>
            <person name="Qin X."/>
            <person name="Jiang H."/>
            <person name="Igboeli O.C."/>
            <person name="Muzny D."/>
            <person name="Dugan-Rocha S."/>
            <person name="Ding Y."/>
            <person name="Hawes A."/>
            <person name="Liu W."/>
            <person name="Perez L."/>
            <person name="Kovar C."/>
            <person name="Dinh H."/>
            <person name="Lee S."/>
            <person name="Nazareth L."/>
            <person name="Blyth P."/>
            <person name="Holder M."/>
            <person name="Buhay C."/>
            <person name="Tirumalai M.R."/>
            <person name="Liu Y."/>
            <person name="Dasgupta I."/>
            <person name="Bokhetache L."/>
            <person name="Fujita M."/>
            <person name="Karouia F."/>
            <person name="Eswara Moorthy P."/>
            <person name="Siefert J."/>
            <person name="Uzman A."/>
            <person name="Buzumbo P."/>
            <person name="Verma A."/>
            <person name="Zwiya H."/>
            <person name="McWilliams B.D."/>
            <person name="Olowu A."/>
            <person name="Clinkenbeard K.D."/>
            <person name="Newcombe D."/>
            <person name="Golebiewski L."/>
            <person name="Petrosino J.F."/>
            <person name="Nicholson W.L."/>
            <person name="Fox G.E."/>
            <person name="Venkateswaran K."/>
            <person name="Highlander S.K."/>
            <person name="Weinstock G.M."/>
        </authorList>
    </citation>
    <scope>NUCLEOTIDE SEQUENCE [LARGE SCALE GENOMIC DNA]</scope>
    <source>
        <strain>SAFR-032</strain>
    </source>
</reference>